<organism>
    <name type="scientific">Caldanaerobacter subterraneus subsp. tengcongensis (strain DSM 15242 / JCM 11007 / NBRC 100824 / MB4)</name>
    <name type="common">Thermoanaerobacter tengcongensis</name>
    <dbReference type="NCBI Taxonomy" id="273068"/>
    <lineage>
        <taxon>Bacteria</taxon>
        <taxon>Bacillati</taxon>
        <taxon>Bacillota</taxon>
        <taxon>Clostridia</taxon>
        <taxon>Thermoanaerobacterales</taxon>
        <taxon>Thermoanaerobacteraceae</taxon>
        <taxon>Caldanaerobacter</taxon>
    </lineage>
</organism>
<accession>Q8RA21</accession>
<evidence type="ECO:0000255" key="1">
    <source>
        <dbReference type="HAMAP-Rule" id="MF_00291"/>
    </source>
</evidence>
<evidence type="ECO:0000305" key="2"/>
<dbReference type="EMBL" id="AE008691">
    <property type="protein sequence ID" value="AAM24631.1"/>
    <property type="molecule type" value="Genomic_DNA"/>
</dbReference>
<dbReference type="RefSeq" id="WP_011025687.1">
    <property type="nucleotide sequence ID" value="NC_003869.1"/>
</dbReference>
<dbReference type="SMR" id="Q8RA21"/>
<dbReference type="STRING" id="273068.TTE1409"/>
<dbReference type="KEGG" id="tte:TTE1409"/>
<dbReference type="eggNOG" id="COG0052">
    <property type="taxonomic scope" value="Bacteria"/>
</dbReference>
<dbReference type="HOGENOM" id="CLU_040318_1_2_9"/>
<dbReference type="OrthoDB" id="9808036at2"/>
<dbReference type="Proteomes" id="UP000000555">
    <property type="component" value="Chromosome"/>
</dbReference>
<dbReference type="GO" id="GO:0022627">
    <property type="term" value="C:cytosolic small ribosomal subunit"/>
    <property type="evidence" value="ECO:0007669"/>
    <property type="project" value="TreeGrafter"/>
</dbReference>
<dbReference type="GO" id="GO:0003735">
    <property type="term" value="F:structural constituent of ribosome"/>
    <property type="evidence" value="ECO:0007669"/>
    <property type="project" value="InterPro"/>
</dbReference>
<dbReference type="GO" id="GO:0006412">
    <property type="term" value="P:translation"/>
    <property type="evidence" value="ECO:0007669"/>
    <property type="project" value="UniProtKB-UniRule"/>
</dbReference>
<dbReference type="CDD" id="cd01425">
    <property type="entry name" value="RPS2"/>
    <property type="match status" value="1"/>
</dbReference>
<dbReference type="FunFam" id="1.10.287.610:FF:000001">
    <property type="entry name" value="30S ribosomal protein S2"/>
    <property type="match status" value="1"/>
</dbReference>
<dbReference type="Gene3D" id="3.40.50.10490">
    <property type="entry name" value="Glucose-6-phosphate isomerase like protein, domain 1"/>
    <property type="match status" value="1"/>
</dbReference>
<dbReference type="Gene3D" id="1.10.287.610">
    <property type="entry name" value="Helix hairpin bin"/>
    <property type="match status" value="1"/>
</dbReference>
<dbReference type="HAMAP" id="MF_00291_B">
    <property type="entry name" value="Ribosomal_uS2_B"/>
    <property type="match status" value="1"/>
</dbReference>
<dbReference type="InterPro" id="IPR001865">
    <property type="entry name" value="Ribosomal_uS2"/>
</dbReference>
<dbReference type="InterPro" id="IPR005706">
    <property type="entry name" value="Ribosomal_uS2_bac/mit/plastid"/>
</dbReference>
<dbReference type="InterPro" id="IPR018130">
    <property type="entry name" value="Ribosomal_uS2_CS"/>
</dbReference>
<dbReference type="InterPro" id="IPR023591">
    <property type="entry name" value="Ribosomal_uS2_flav_dom_sf"/>
</dbReference>
<dbReference type="NCBIfam" id="TIGR01011">
    <property type="entry name" value="rpsB_bact"/>
    <property type="match status" value="1"/>
</dbReference>
<dbReference type="PANTHER" id="PTHR12534">
    <property type="entry name" value="30S RIBOSOMAL PROTEIN S2 PROKARYOTIC AND ORGANELLAR"/>
    <property type="match status" value="1"/>
</dbReference>
<dbReference type="PANTHER" id="PTHR12534:SF0">
    <property type="entry name" value="SMALL RIBOSOMAL SUBUNIT PROTEIN US2M"/>
    <property type="match status" value="1"/>
</dbReference>
<dbReference type="Pfam" id="PF00318">
    <property type="entry name" value="Ribosomal_S2"/>
    <property type="match status" value="1"/>
</dbReference>
<dbReference type="PRINTS" id="PR00395">
    <property type="entry name" value="RIBOSOMALS2"/>
</dbReference>
<dbReference type="SUPFAM" id="SSF52313">
    <property type="entry name" value="Ribosomal protein S2"/>
    <property type="match status" value="1"/>
</dbReference>
<dbReference type="PROSITE" id="PS00962">
    <property type="entry name" value="RIBOSOMAL_S2_1"/>
    <property type="match status" value="1"/>
</dbReference>
<reference key="1">
    <citation type="journal article" date="2002" name="Genome Res.">
        <title>A complete sequence of the T. tengcongensis genome.</title>
        <authorList>
            <person name="Bao Q."/>
            <person name="Tian Y."/>
            <person name="Li W."/>
            <person name="Xu Z."/>
            <person name="Xuan Z."/>
            <person name="Hu S."/>
            <person name="Dong W."/>
            <person name="Yang J."/>
            <person name="Chen Y."/>
            <person name="Xue Y."/>
            <person name="Xu Y."/>
            <person name="Lai X."/>
            <person name="Huang L."/>
            <person name="Dong X."/>
            <person name="Ma Y."/>
            <person name="Ling L."/>
            <person name="Tan H."/>
            <person name="Chen R."/>
            <person name="Wang J."/>
            <person name="Yu J."/>
            <person name="Yang H."/>
        </authorList>
    </citation>
    <scope>NUCLEOTIDE SEQUENCE [LARGE SCALE GENOMIC DNA]</scope>
    <source>
        <strain>DSM 15242 / JCM 11007 / NBRC 100824 / MB4</strain>
    </source>
</reference>
<gene>
    <name evidence="1" type="primary">rpsB</name>
    <name type="ordered locus">TTE1409</name>
</gene>
<sequence>MSIVSMKQLLEAGVHFGHQTRRWNPKMAPYIFTERNGIYIIDLQQTVEKLEQAYEFVKKLVMDGGTILFVGTKKQAQESIKEEAERCGMFYVNQRWLGGTLTNFKTIKTRIQRLKELKRMEEDGTFEVLPKKEVIRLRKEKERLQKFLGGIENMESLPSALFIVDPKKEAIAVSEARALEIPIVAIVDTNCDPELIDYPIPGNDDAIRAVKLITSKIADAVLEGKQGEQFEAAEE</sequence>
<protein>
    <recommendedName>
        <fullName evidence="1">Small ribosomal subunit protein uS2</fullName>
    </recommendedName>
    <alternativeName>
        <fullName evidence="2">30S ribosomal protein S2</fullName>
    </alternativeName>
</protein>
<feature type="chain" id="PRO_0000134265" description="Small ribosomal subunit protein uS2">
    <location>
        <begin position="1"/>
        <end position="235"/>
    </location>
</feature>
<keyword id="KW-1185">Reference proteome</keyword>
<keyword id="KW-0687">Ribonucleoprotein</keyword>
<keyword id="KW-0689">Ribosomal protein</keyword>
<proteinExistence type="inferred from homology"/>
<comment type="similarity">
    <text evidence="1">Belongs to the universal ribosomal protein uS2 family.</text>
</comment>
<name>RS2_CALS4</name>